<protein>
    <recommendedName>
        <fullName>Synaptonemal complex protein 3</fullName>
        <shortName>SCP-3</shortName>
    </recommendedName>
</protein>
<keyword id="KW-0002">3D-structure</keyword>
<keyword id="KW-0131">Cell cycle</keyword>
<keyword id="KW-0132">Cell division</keyword>
<keyword id="KW-0137">Centromere</keyword>
<keyword id="KW-0158">Chromosome</keyword>
<keyword id="KW-0175">Coiled coil</keyword>
<keyword id="KW-0238">DNA-binding</keyword>
<keyword id="KW-0469">Meiosis</keyword>
<keyword id="KW-0539">Nucleus</keyword>
<keyword id="KW-0597">Phosphoprotein</keyword>
<keyword id="KW-1185">Reference proteome</keyword>
<gene>
    <name type="primary">Sycp3</name>
    <name evidence="17" type="synonym">Scp3</name>
</gene>
<organism>
    <name type="scientific">Mus musculus</name>
    <name type="common">Mouse</name>
    <dbReference type="NCBI Taxonomy" id="10090"/>
    <lineage>
        <taxon>Eukaryota</taxon>
        <taxon>Metazoa</taxon>
        <taxon>Chordata</taxon>
        <taxon>Craniata</taxon>
        <taxon>Vertebrata</taxon>
        <taxon>Euteleostomi</taxon>
        <taxon>Mammalia</taxon>
        <taxon>Eutheria</taxon>
        <taxon>Euarchontoglires</taxon>
        <taxon>Glires</taxon>
        <taxon>Rodentia</taxon>
        <taxon>Myomorpha</taxon>
        <taxon>Muroidea</taxon>
        <taxon>Muridae</taxon>
        <taxon>Murinae</taxon>
        <taxon>Mus</taxon>
        <taxon>Mus</taxon>
    </lineage>
</organism>
<reference key="1">
    <citation type="journal article" date="1997" name="Mamm. Genome">
        <title>The mouse synaptosomal complex protein gene Sycp3 maps to band C of chromosome 10.</title>
        <authorList>
            <person name="Klink A."/>
            <person name="Lee M."/>
            <person name="Cooke H.J."/>
        </authorList>
    </citation>
    <scope>NUCLEOTIDE SEQUENCE [GENOMIC DNA / MRNA]</scope>
    <source>
        <tissue>Liver</tissue>
        <tissue>Testis</tissue>
    </source>
</reference>
<reference key="2">
    <citation type="journal article" date="2001" name="Biochim. Biophys. Acta">
        <title>The genomic structure of SYCP3, a meiosis-specific gene encoding a protein of the chromosome core.</title>
        <authorList>
            <person name="Botelho R.J."/>
            <person name="DiNicolo L."/>
            <person name="Tsao N."/>
            <person name="Karaiskakis A."/>
            <person name="Tarsounas M."/>
            <person name="Moens P.B."/>
            <person name="Pearlman R.E."/>
        </authorList>
    </citation>
    <scope>NUCLEOTIDE SEQUENCE [GENOMIC DNA]</scope>
    <source>
        <strain>129/SvJ</strain>
    </source>
</reference>
<reference key="3">
    <citation type="journal article" date="2005" name="Science">
        <title>The transcriptional landscape of the mammalian genome.</title>
        <authorList>
            <person name="Carninci P."/>
            <person name="Kasukawa T."/>
            <person name="Katayama S."/>
            <person name="Gough J."/>
            <person name="Frith M.C."/>
            <person name="Maeda N."/>
            <person name="Oyama R."/>
            <person name="Ravasi T."/>
            <person name="Lenhard B."/>
            <person name="Wells C."/>
            <person name="Kodzius R."/>
            <person name="Shimokawa K."/>
            <person name="Bajic V.B."/>
            <person name="Brenner S.E."/>
            <person name="Batalov S."/>
            <person name="Forrest A.R."/>
            <person name="Zavolan M."/>
            <person name="Davis M.J."/>
            <person name="Wilming L.G."/>
            <person name="Aidinis V."/>
            <person name="Allen J.E."/>
            <person name="Ambesi-Impiombato A."/>
            <person name="Apweiler R."/>
            <person name="Aturaliya R.N."/>
            <person name="Bailey T.L."/>
            <person name="Bansal M."/>
            <person name="Baxter L."/>
            <person name="Beisel K.W."/>
            <person name="Bersano T."/>
            <person name="Bono H."/>
            <person name="Chalk A.M."/>
            <person name="Chiu K.P."/>
            <person name="Choudhary V."/>
            <person name="Christoffels A."/>
            <person name="Clutterbuck D.R."/>
            <person name="Crowe M.L."/>
            <person name="Dalla E."/>
            <person name="Dalrymple B.P."/>
            <person name="de Bono B."/>
            <person name="Della Gatta G."/>
            <person name="di Bernardo D."/>
            <person name="Down T."/>
            <person name="Engstrom P."/>
            <person name="Fagiolini M."/>
            <person name="Faulkner G."/>
            <person name="Fletcher C.F."/>
            <person name="Fukushima T."/>
            <person name="Furuno M."/>
            <person name="Futaki S."/>
            <person name="Gariboldi M."/>
            <person name="Georgii-Hemming P."/>
            <person name="Gingeras T.R."/>
            <person name="Gojobori T."/>
            <person name="Green R.E."/>
            <person name="Gustincich S."/>
            <person name="Harbers M."/>
            <person name="Hayashi Y."/>
            <person name="Hensch T.K."/>
            <person name="Hirokawa N."/>
            <person name="Hill D."/>
            <person name="Huminiecki L."/>
            <person name="Iacono M."/>
            <person name="Ikeo K."/>
            <person name="Iwama A."/>
            <person name="Ishikawa T."/>
            <person name="Jakt M."/>
            <person name="Kanapin A."/>
            <person name="Katoh M."/>
            <person name="Kawasawa Y."/>
            <person name="Kelso J."/>
            <person name="Kitamura H."/>
            <person name="Kitano H."/>
            <person name="Kollias G."/>
            <person name="Krishnan S.P."/>
            <person name="Kruger A."/>
            <person name="Kummerfeld S.K."/>
            <person name="Kurochkin I.V."/>
            <person name="Lareau L.F."/>
            <person name="Lazarevic D."/>
            <person name="Lipovich L."/>
            <person name="Liu J."/>
            <person name="Liuni S."/>
            <person name="McWilliam S."/>
            <person name="Madan Babu M."/>
            <person name="Madera M."/>
            <person name="Marchionni L."/>
            <person name="Matsuda H."/>
            <person name="Matsuzawa S."/>
            <person name="Miki H."/>
            <person name="Mignone F."/>
            <person name="Miyake S."/>
            <person name="Morris K."/>
            <person name="Mottagui-Tabar S."/>
            <person name="Mulder N."/>
            <person name="Nakano N."/>
            <person name="Nakauchi H."/>
            <person name="Ng P."/>
            <person name="Nilsson R."/>
            <person name="Nishiguchi S."/>
            <person name="Nishikawa S."/>
            <person name="Nori F."/>
            <person name="Ohara O."/>
            <person name="Okazaki Y."/>
            <person name="Orlando V."/>
            <person name="Pang K.C."/>
            <person name="Pavan W.J."/>
            <person name="Pavesi G."/>
            <person name="Pesole G."/>
            <person name="Petrovsky N."/>
            <person name="Piazza S."/>
            <person name="Reed J."/>
            <person name="Reid J.F."/>
            <person name="Ring B.Z."/>
            <person name="Ringwald M."/>
            <person name="Rost B."/>
            <person name="Ruan Y."/>
            <person name="Salzberg S.L."/>
            <person name="Sandelin A."/>
            <person name="Schneider C."/>
            <person name="Schoenbach C."/>
            <person name="Sekiguchi K."/>
            <person name="Semple C.A."/>
            <person name="Seno S."/>
            <person name="Sessa L."/>
            <person name="Sheng Y."/>
            <person name="Shibata Y."/>
            <person name="Shimada H."/>
            <person name="Shimada K."/>
            <person name="Silva D."/>
            <person name="Sinclair B."/>
            <person name="Sperling S."/>
            <person name="Stupka E."/>
            <person name="Sugiura K."/>
            <person name="Sultana R."/>
            <person name="Takenaka Y."/>
            <person name="Taki K."/>
            <person name="Tammoja K."/>
            <person name="Tan S.L."/>
            <person name="Tang S."/>
            <person name="Taylor M.S."/>
            <person name="Tegner J."/>
            <person name="Teichmann S.A."/>
            <person name="Ueda H.R."/>
            <person name="van Nimwegen E."/>
            <person name="Verardo R."/>
            <person name="Wei C.L."/>
            <person name="Yagi K."/>
            <person name="Yamanishi H."/>
            <person name="Zabarovsky E."/>
            <person name="Zhu S."/>
            <person name="Zimmer A."/>
            <person name="Hide W."/>
            <person name="Bult C."/>
            <person name="Grimmond S.M."/>
            <person name="Teasdale R.D."/>
            <person name="Liu E.T."/>
            <person name="Brusic V."/>
            <person name="Quackenbush J."/>
            <person name="Wahlestedt C."/>
            <person name="Mattick J.S."/>
            <person name="Hume D.A."/>
            <person name="Kai C."/>
            <person name="Sasaki D."/>
            <person name="Tomaru Y."/>
            <person name="Fukuda S."/>
            <person name="Kanamori-Katayama M."/>
            <person name="Suzuki M."/>
            <person name="Aoki J."/>
            <person name="Arakawa T."/>
            <person name="Iida J."/>
            <person name="Imamura K."/>
            <person name="Itoh M."/>
            <person name="Kato T."/>
            <person name="Kawaji H."/>
            <person name="Kawagashira N."/>
            <person name="Kawashima T."/>
            <person name="Kojima M."/>
            <person name="Kondo S."/>
            <person name="Konno H."/>
            <person name="Nakano K."/>
            <person name="Ninomiya N."/>
            <person name="Nishio T."/>
            <person name="Okada M."/>
            <person name="Plessy C."/>
            <person name="Shibata K."/>
            <person name="Shiraki T."/>
            <person name="Suzuki S."/>
            <person name="Tagami M."/>
            <person name="Waki K."/>
            <person name="Watahiki A."/>
            <person name="Okamura-Oho Y."/>
            <person name="Suzuki H."/>
            <person name="Kawai J."/>
            <person name="Hayashizaki Y."/>
        </authorList>
    </citation>
    <scope>NUCLEOTIDE SEQUENCE [LARGE SCALE MRNA]</scope>
    <source>
        <strain>C57BL/6J</strain>
        <tissue>Embryonic stem cell</tissue>
    </source>
</reference>
<reference key="4">
    <citation type="journal article" date="2000" name="Mol. Cell">
        <title>The murine SCP3 gene is required for synaptonemal complex assembly, chromosome synapsis, and male fertility.</title>
        <authorList>
            <person name="Yuan L."/>
            <person name="Liu J.G."/>
            <person name="Zhao J."/>
            <person name="Brundell E."/>
            <person name="Daneholt B."/>
            <person name="Hoog C."/>
        </authorList>
    </citation>
    <scope>FUNCTION</scope>
    <scope>DISRUPTION PHENOTYPE</scope>
    <scope>TISSUE SPECIFICITY</scope>
</reference>
<reference key="5">
    <citation type="journal article" date="2002" name="Science">
        <title>Female germ cell aneuploidy and embryo death in mice lacking the meiosis-specific protein SCP3.</title>
        <authorList>
            <person name="Yuan L."/>
            <person name="Liu J.G."/>
            <person name="Hoja M.R."/>
            <person name="Wilbertz J."/>
            <person name="Nordqvist K."/>
            <person name="Hoeoeg C."/>
        </authorList>
    </citation>
    <scope>DISRUPTION PHENOTYPE</scope>
</reference>
<reference key="6">
    <citation type="journal article" date="2006" name="J. Cell Biol.">
        <title>Mouse SYCP2 is required for synaptonemal complex assembly and chromosomal synapsis during male meiosis.</title>
        <authorList>
            <person name="Yang F."/>
            <person name="De La Fuente R."/>
            <person name="Leu N.A."/>
            <person name="Baumann C."/>
            <person name="McLaughlin K.J."/>
            <person name="Wang P.J."/>
        </authorList>
    </citation>
    <scope>INTERACTION WITH SYCP2</scope>
    <scope>SUBCELLULAR LOCATION</scope>
    <scope>SUBUNIT</scope>
    <scope>FUNCTION</scope>
    <scope>TISSUE SPECIFICITY</scope>
</reference>
<reference key="7">
    <citation type="journal article" date="2010" name="Cell">
        <title>A tissue-specific atlas of mouse protein phosphorylation and expression.</title>
        <authorList>
            <person name="Huttlin E.L."/>
            <person name="Jedrychowski M.P."/>
            <person name="Elias J.E."/>
            <person name="Goswami T."/>
            <person name="Rad R."/>
            <person name="Beausoleil S.A."/>
            <person name="Villen J."/>
            <person name="Haas W."/>
            <person name="Sowa M.E."/>
            <person name="Gygi S.P."/>
        </authorList>
    </citation>
    <scope>PHOSPHORYLATION [LARGE SCALE ANALYSIS] AT SER-8; SER-10; SER-11; SER-55; SER-77 AND THR-218</scope>
    <scope>IDENTIFICATION BY MASS SPECTROMETRY [LARGE SCALE ANALYSIS]</scope>
    <source>
        <tissue>Testis</tissue>
    </source>
</reference>
<reference key="8">
    <citation type="journal article" date="2012" name="PLoS Genet.">
        <title>Synaptonemal complex components persist at centromeres and are required for homologous centromere pairing in mouse spermatocytes.</title>
        <authorList>
            <person name="Bisig C.G."/>
            <person name="Guiraldelli M.F."/>
            <person name="Kouznetsova A."/>
            <person name="Scherthan H."/>
            <person name="Hoeoeg C."/>
            <person name="Dawson D.S."/>
            <person name="Pezza R.J."/>
        </authorList>
    </citation>
    <scope>FUNCTION</scope>
    <scope>SUBCELLULAR LOCATION</scope>
    <scope>TISSUE SPECIFICITY</scope>
</reference>
<reference key="9">
    <citation type="journal article" date="2012" name="PLoS Genet.">
        <title>Phosphorylation of chromosome core components may serve as axis marks for the status of chromosomal events during mammalian meiosis.</title>
        <authorList>
            <person name="Fukuda T."/>
            <person name="Pratto F."/>
            <person name="Schimenti J.C."/>
            <person name="Turner J.M."/>
            <person name="Camerini-Otero R.D."/>
            <person name="Hoeoeg C."/>
        </authorList>
    </citation>
    <scope>FUNCTION</scope>
    <scope>SUBCELLULAR LOCATION</scope>
    <scope>PHOSPHORYLATION</scope>
</reference>
<reference key="10">
    <citation type="journal article" date="2014" name="Chromosoma">
        <title>Localisation of the SMC loading complex Nipbl/Mau2 during mammalian meiotic prophase I.</title>
        <authorList>
            <person name="Visnes T."/>
            <person name="Giordano F."/>
            <person name="Kuznetsova A."/>
            <person name="Suja J.A."/>
            <person name="Lander A.D."/>
            <person name="Calof A.L."/>
            <person name="Stroem L."/>
        </authorList>
    </citation>
    <scope>SUBCELLULAR LOCATION</scope>
    <scope>TISSUE SPECIFICITY</scope>
</reference>
<reference key="11">
    <citation type="journal article" date="2017" name="Mol. Biol. Cell">
        <title>PRDM9 interactions with other proteins provide a link between recombination hotspots and the chromosomal axis in meiosis.</title>
        <authorList>
            <person name="Parvanov E.D."/>
            <person name="Tian H."/>
            <person name="Billings T."/>
            <person name="Saxl R.L."/>
            <person name="Spruce C."/>
            <person name="Aithal R."/>
            <person name="Krejci L."/>
            <person name="Paigen K."/>
            <person name="Petkov P.M."/>
        </authorList>
    </citation>
    <scope>INTERACTION WITH PRDM9; EWSR1; REC8 AND SYCP1</scope>
</reference>
<reference key="12">
    <citation type="journal article" date="2018" name="Commun. Biol.">
        <title>Evolutionarily-conserved MZIP2 is essential for crossover formation in mammalian meiosis.</title>
        <authorList>
            <person name="Zhang Q."/>
            <person name="Shao J."/>
            <person name="Fan H.Y."/>
            <person name="Yu C."/>
        </authorList>
    </citation>
    <scope>SUBCELLULAR LOCATION</scope>
</reference>
<reference key="13">
    <citation type="journal article" date="2019" name="Nucleic Acids Res.">
        <title>SCRE serves as a unique synaptonemal complex fastener and is essential for progression of meiosis prophase I in mice.</title>
        <authorList>
            <person name="Liu H."/>
            <person name="Huang T."/>
            <person name="Li M."/>
            <person name="Li M."/>
            <person name="Zhang C."/>
            <person name="Jiang J."/>
            <person name="Yu X."/>
            <person name="Yin Y."/>
            <person name="Zhang F."/>
            <person name="Lu G."/>
            <person name="Luo M.C."/>
            <person name="Zhang L.R."/>
            <person name="Li J."/>
            <person name="Liu K."/>
            <person name="Chen Z.J."/>
        </authorList>
    </citation>
    <scope>SUBCELLULAR LOCATION</scope>
</reference>
<reference key="14">
    <citation type="journal article" date="2019" name="Sci. Adv.">
        <title>SPO16 binds SHOC1 to promote homologous recombination and crossing-over in meiotic prophase I.</title>
        <authorList>
            <person name="Zhang Q."/>
            <person name="Ji S.Y."/>
            <person name="Busayavalasa K."/>
            <person name="Yu C."/>
        </authorList>
    </citation>
    <scope>SUBCELLULAR LOCATION</scope>
</reference>
<comment type="function">
    <text evidence="6 7 8 10 11">Component of the synaptonemal complexes (SCS), formed between homologous chromosomes during meiotic prophase (PubMed:11311943, PubMed:22761579). Required for centromere pairing during meiosis in male germ cells (PubMed:22761579). Required for normal meiosis during spermatogenesis and male fertility (PubMed:10678170). Plays a lesser role in female fertility (PubMed:10678170, PubMed:12004129). Required for efficient phosphorylation of HORMAD1 and HORMAD2 (PubMed:22346761).</text>
</comment>
<comment type="subunit">
    <text evidence="3 9 13">Component of the lateral elements of synaptonemal complexes (PubMed:16717126). Homotetramer; the tetrameric helix bundles assemble end to end into long homopolimeric fibers that exhibit a transversal striation with a periodicity of about 20 nm (in vitro) (By similarity). Interacts with SYCP2 (PubMed:16717126). Forms a complex with EWSR1, PRDM9, REC8 and SYCP1; complex formation is dependent of phosphorylated form of REC8 and requires PRDM9 bound to hotspot DNA; EWSR1 joins PRDM9 with the chromosomal axis through REC8 (PubMed:27932493).</text>
</comment>
<comment type="subcellular location">
    <subcellularLocation>
        <location evidence="9">Nucleus</location>
    </subcellularLocation>
    <subcellularLocation>
        <location evidence="9 10 11 12 14 15 16">Chromosome</location>
    </subcellularLocation>
    <subcellularLocation>
        <location evidence="11">Chromosome</location>
        <location evidence="11">Centromere</location>
    </subcellularLocation>
    <text evidence="1 10">It is present in early unpaired cores, in the lateral domains of the synaptonemal complex and in the chromosome cores when they separate at diplotene. It is found axial to the metaphase I chromosomes and in association with pairs of sister centromeres. The centromere-associated protein becomes dissociated from the centromeres at anaphase II and is not found in mitotic metaphase centromeres (By similarity). The phosphorylated form localizes preferentially to unsynapsed chromosomal regions (PubMed:22346761).</text>
</comment>
<comment type="tissue specificity">
    <text evidence="6 9 11 12">Detected in oocytes (PubMed:16717126). Detected in spermatocytes and testis (at protein level) (PubMed:10678170, PubMed:16717126, PubMed:22761579).</text>
</comment>
<comment type="domain">
    <text evidence="3">Composed of a long central coiled coil domain. The N-terminal and C-terminal regions interact with DNA.</text>
</comment>
<comment type="PTM">
    <text evidence="10">Phosphorylated.</text>
</comment>
<comment type="disruption phenotype">
    <text evidence="6 8">Homozygous males with null mutations have smaller testes and are sterile, due to massive apoptotic cell death of male germ cells during meiotic prophase. Spermatocytes fail to form axial/lateral elements and synaptonemal complexes, and the chromosomes in the mutant spermatocytes do not synapse (PubMed:10678170). In contrast, females are fertile and generate healthy offspring. However, they exhibit a sharp reduction in litter size that increases with advancing maternal age (PubMed:10678170, PubMed:12004129). In contrast to wild-type, a high percentage of the mutant embryos display aneuploidy (PubMed:12004129).</text>
</comment>
<comment type="similarity">
    <text evidence="18">Belongs to the XLR/SYCP3 family.</text>
</comment>
<evidence type="ECO:0000250" key="1">
    <source>
        <dbReference type="UniProtKB" id="Q60547"/>
    </source>
</evidence>
<evidence type="ECO:0000250" key="2">
    <source>
        <dbReference type="UniProtKB" id="Q63520"/>
    </source>
</evidence>
<evidence type="ECO:0000250" key="3">
    <source>
        <dbReference type="UniProtKB" id="Q8IZU3"/>
    </source>
</evidence>
<evidence type="ECO:0000255" key="4"/>
<evidence type="ECO:0000256" key="5">
    <source>
        <dbReference type="SAM" id="MobiDB-lite"/>
    </source>
</evidence>
<evidence type="ECO:0000269" key="6">
    <source>
    </source>
</evidence>
<evidence type="ECO:0000269" key="7">
    <source>
    </source>
</evidence>
<evidence type="ECO:0000269" key="8">
    <source>
    </source>
</evidence>
<evidence type="ECO:0000269" key="9">
    <source>
    </source>
</evidence>
<evidence type="ECO:0000269" key="10">
    <source>
    </source>
</evidence>
<evidence type="ECO:0000269" key="11">
    <source>
    </source>
</evidence>
<evidence type="ECO:0000269" key="12">
    <source>
    </source>
</evidence>
<evidence type="ECO:0000269" key="13">
    <source>
    </source>
</evidence>
<evidence type="ECO:0000269" key="14">
    <source>
    </source>
</evidence>
<evidence type="ECO:0000269" key="15">
    <source>
    </source>
</evidence>
<evidence type="ECO:0000269" key="16">
    <source>
    </source>
</evidence>
<evidence type="ECO:0000303" key="17">
    <source>
    </source>
</evidence>
<evidence type="ECO:0000305" key="18"/>
<evidence type="ECO:0007744" key="19">
    <source>
    </source>
</evidence>
<evidence type="ECO:0007829" key="20">
    <source>
        <dbReference type="PDB" id="6DD9"/>
    </source>
</evidence>
<name>SYCP3_MOUSE</name>
<sequence length="254" mass="29347">MLRGCGDSDSSPEPLSKHLKMVPGGRKHSGKSGKPPLVDQPKKAFDFEKDDKDLSGSEEDVADEKAPVIDKHGKKRSAGIIEDVGGEVQNMLEKFGADINKALLAKRKRIEMYTKASFKASNQKIEQIWKTQQEEIQKLNNEYSQQFMNVLQQWELDIQKFEEQGEKLSNLFRQQQKIFQQSRIVQSQRMFAMKQIHEQFIKSLEDVEKNNDNLFTGTQSELKKEMAMLQKKVMMETQQQEMANVRKSLQSMLF</sequence>
<feature type="chain" id="PRO_0000223044" description="Synaptonemal complex protein 3">
    <location>
        <begin position="1"/>
        <end position="254"/>
    </location>
</feature>
<feature type="region of interest" description="Disordered" evidence="5">
    <location>
        <begin position="1"/>
        <end position="65"/>
    </location>
</feature>
<feature type="region of interest" description="Interaction with DNA" evidence="3">
    <location>
        <begin position="71"/>
        <end position="76"/>
    </location>
</feature>
<feature type="region of interest" description="Important for oligomerization and fiber formation" evidence="3">
    <location>
        <begin position="87"/>
        <end position="92"/>
    </location>
</feature>
<feature type="region of interest" description="Interaction with DNA" evidence="3">
    <location>
        <begin position="106"/>
        <end position="109"/>
    </location>
</feature>
<feature type="region of interest" description="Important for oligomerization and fiber formation" evidence="3">
    <location>
        <begin position="249"/>
        <end position="254"/>
    </location>
</feature>
<feature type="coiled-coil region" evidence="3 4">
    <location>
        <begin position="84"/>
        <end position="241"/>
    </location>
</feature>
<feature type="short sequence motif" description="Nuclear localization signal" evidence="4">
    <location>
        <begin position="106"/>
        <end position="109"/>
    </location>
</feature>
<feature type="compositionally biased region" description="Basic residues" evidence="5">
    <location>
        <begin position="17"/>
        <end position="31"/>
    </location>
</feature>
<feature type="compositionally biased region" description="Basic and acidic residues" evidence="5">
    <location>
        <begin position="40"/>
        <end position="55"/>
    </location>
</feature>
<feature type="modified residue" description="Phosphoserine" evidence="19">
    <location>
        <position position="8"/>
    </location>
</feature>
<feature type="modified residue" description="Phosphoserine" evidence="19">
    <location>
        <position position="10"/>
    </location>
</feature>
<feature type="modified residue" description="Phosphoserine" evidence="19">
    <location>
        <position position="11"/>
    </location>
</feature>
<feature type="modified residue" description="Phosphoserine" evidence="19">
    <location>
        <position position="55"/>
    </location>
</feature>
<feature type="modified residue" description="Phosphoserine" evidence="2">
    <location>
        <position position="57"/>
    </location>
</feature>
<feature type="modified residue" description="Phosphoserine" evidence="19">
    <location>
        <position position="77"/>
    </location>
</feature>
<feature type="modified residue" description="Phosphothreonine" evidence="19">
    <location>
        <position position="218"/>
    </location>
</feature>
<feature type="sequence conflict" description="In Ref. 3; BAE20894." evidence="18" ref="3">
    <original>F</original>
    <variation>K</variation>
    <location>
        <position position="191"/>
    </location>
</feature>
<feature type="sequence conflict" description="In Ref. 3; BAE20894." evidence="18" ref="3">
    <original>M</original>
    <variation>I</variation>
    <location>
        <position position="193"/>
    </location>
</feature>
<feature type="helix" evidence="20">
    <location>
        <begin position="112"/>
        <end position="211"/>
    </location>
</feature>
<feature type="turn" evidence="20">
    <location>
        <begin position="214"/>
        <end position="216"/>
    </location>
</feature>
<feature type="helix" evidence="20">
    <location>
        <begin position="218"/>
        <end position="237"/>
    </location>
</feature>
<dbReference type="EMBL" id="Y08485">
    <property type="protein sequence ID" value="CAA69719.1"/>
    <property type="molecule type" value="mRNA"/>
</dbReference>
<dbReference type="EMBL" id="Y08486">
    <property type="protein sequence ID" value="CAA69720.1"/>
    <property type="molecule type" value="Genomic_DNA"/>
</dbReference>
<dbReference type="EMBL" id="AF181478">
    <property type="protein sequence ID" value="AAG17538.1"/>
    <property type="molecule type" value="Genomic_DNA"/>
</dbReference>
<dbReference type="EMBL" id="AF181473">
    <property type="protein sequence ID" value="AAG17538.1"/>
    <property type="status" value="JOINED"/>
    <property type="molecule type" value="Genomic_DNA"/>
</dbReference>
<dbReference type="EMBL" id="AF181474">
    <property type="protein sequence ID" value="AAG17538.1"/>
    <property type="status" value="JOINED"/>
    <property type="molecule type" value="Genomic_DNA"/>
</dbReference>
<dbReference type="EMBL" id="AF181475">
    <property type="protein sequence ID" value="AAG17538.1"/>
    <property type="status" value="JOINED"/>
    <property type="molecule type" value="Genomic_DNA"/>
</dbReference>
<dbReference type="EMBL" id="AF181476">
    <property type="protein sequence ID" value="AAG17538.1"/>
    <property type="status" value="JOINED"/>
    <property type="molecule type" value="Genomic_DNA"/>
</dbReference>
<dbReference type="EMBL" id="AF181477">
    <property type="protein sequence ID" value="AAG17538.1"/>
    <property type="status" value="JOINED"/>
    <property type="molecule type" value="Genomic_DNA"/>
</dbReference>
<dbReference type="EMBL" id="AK131949">
    <property type="protein sequence ID" value="BAE20894.1"/>
    <property type="molecule type" value="mRNA"/>
</dbReference>
<dbReference type="CCDS" id="CCDS24111.1"/>
<dbReference type="RefSeq" id="NP_035647.2">
    <property type="nucleotide sequence ID" value="NM_011517.2"/>
</dbReference>
<dbReference type="PDB" id="6DD8">
    <property type="method" value="X-ray"/>
    <property type="resolution" value="2.60 A"/>
    <property type="chains" value="A/B/C/D=105-248"/>
</dbReference>
<dbReference type="PDB" id="6DD9">
    <property type="method" value="X-ray"/>
    <property type="resolution" value="2.30 A"/>
    <property type="chains" value="A/B/C/D=105-248"/>
</dbReference>
<dbReference type="PDBsum" id="6DD8"/>
<dbReference type="PDBsum" id="6DD9"/>
<dbReference type="SMR" id="P70281"/>
<dbReference type="BioGRID" id="203598">
    <property type="interactions" value="3"/>
</dbReference>
<dbReference type="CORUM" id="P70281"/>
<dbReference type="FunCoup" id="P70281">
    <property type="interactions" value="524"/>
</dbReference>
<dbReference type="IntAct" id="P70281">
    <property type="interactions" value="3"/>
</dbReference>
<dbReference type="MINT" id="P70281"/>
<dbReference type="STRING" id="10090.ENSMUSP00000020252"/>
<dbReference type="iPTMnet" id="P70281"/>
<dbReference type="PhosphoSitePlus" id="P70281"/>
<dbReference type="PaxDb" id="10090-ENSMUSP00000020252"/>
<dbReference type="ProteomicsDB" id="254733"/>
<dbReference type="DNASU" id="20962"/>
<dbReference type="GeneID" id="20962"/>
<dbReference type="KEGG" id="mmu:20962"/>
<dbReference type="AGR" id="MGI:109542"/>
<dbReference type="CTD" id="50511"/>
<dbReference type="MGI" id="MGI:109542">
    <property type="gene designation" value="Sycp3"/>
</dbReference>
<dbReference type="eggNOG" id="ENOG502R883">
    <property type="taxonomic scope" value="Eukaryota"/>
</dbReference>
<dbReference type="InParanoid" id="P70281"/>
<dbReference type="OrthoDB" id="9621324at2759"/>
<dbReference type="PhylomeDB" id="P70281"/>
<dbReference type="BioGRID-ORCS" id="20962">
    <property type="hits" value="2 hits in 112 CRISPR screens"/>
</dbReference>
<dbReference type="ChiTaRS" id="Sycp3">
    <property type="organism name" value="mouse"/>
</dbReference>
<dbReference type="PRO" id="PR:P70281"/>
<dbReference type="Proteomes" id="UP000000589">
    <property type="component" value="Unplaced"/>
</dbReference>
<dbReference type="RNAct" id="P70281">
    <property type="molecule type" value="protein"/>
</dbReference>
<dbReference type="GO" id="GO:0005694">
    <property type="term" value="C:chromosome"/>
    <property type="evidence" value="ECO:0000314"/>
    <property type="project" value="UniProtKB"/>
</dbReference>
<dbReference type="GO" id="GO:0000775">
    <property type="term" value="C:chromosome, centromeric region"/>
    <property type="evidence" value="ECO:0000314"/>
    <property type="project" value="UniProtKB"/>
</dbReference>
<dbReference type="GO" id="GO:0000793">
    <property type="term" value="C:condensed chromosome"/>
    <property type="evidence" value="ECO:0000314"/>
    <property type="project" value="MGI"/>
</dbReference>
<dbReference type="GO" id="GO:0000779">
    <property type="term" value="C:condensed chromosome, centromeric region"/>
    <property type="evidence" value="ECO:0000314"/>
    <property type="project" value="MGI"/>
</dbReference>
<dbReference type="GO" id="GO:0000794">
    <property type="term" value="C:condensed nuclear chromosome"/>
    <property type="evidence" value="ECO:0000314"/>
    <property type="project" value="MGI"/>
</dbReference>
<dbReference type="GO" id="GO:0001674">
    <property type="term" value="C:female germ cell nucleus"/>
    <property type="evidence" value="ECO:0000314"/>
    <property type="project" value="MGI"/>
</dbReference>
<dbReference type="GO" id="GO:0000800">
    <property type="term" value="C:lateral element"/>
    <property type="evidence" value="ECO:0000314"/>
    <property type="project" value="UniProtKB"/>
</dbReference>
<dbReference type="GO" id="GO:0001673">
    <property type="term" value="C:male germ cell nucleus"/>
    <property type="evidence" value="ECO:0000314"/>
    <property type="project" value="MGI"/>
</dbReference>
<dbReference type="GO" id="GO:0005654">
    <property type="term" value="C:nucleoplasm"/>
    <property type="evidence" value="ECO:0000304"/>
    <property type="project" value="Reactome"/>
</dbReference>
<dbReference type="GO" id="GO:0000795">
    <property type="term" value="C:synaptonemal complex"/>
    <property type="evidence" value="ECO:0000314"/>
    <property type="project" value="MGI"/>
</dbReference>
<dbReference type="GO" id="GO:0000802">
    <property type="term" value="C:transverse filament"/>
    <property type="evidence" value="ECO:0000314"/>
    <property type="project" value="MGI"/>
</dbReference>
<dbReference type="GO" id="GO:0003677">
    <property type="term" value="F:DNA binding"/>
    <property type="evidence" value="ECO:0007669"/>
    <property type="project" value="UniProtKB-KW"/>
</dbReference>
<dbReference type="GO" id="GO:0051301">
    <property type="term" value="P:cell division"/>
    <property type="evidence" value="ECO:0007669"/>
    <property type="project" value="UniProtKB-KW"/>
</dbReference>
<dbReference type="GO" id="GO:1990830">
    <property type="term" value="P:cellular response to leukemia inhibitory factor"/>
    <property type="evidence" value="ECO:0000270"/>
    <property type="project" value="MGI"/>
</dbReference>
<dbReference type="GO" id="GO:0051026">
    <property type="term" value="P:chiasma assembly"/>
    <property type="evidence" value="ECO:0000314"/>
    <property type="project" value="UniProtKB"/>
</dbReference>
<dbReference type="GO" id="GO:0016321">
    <property type="term" value="P:female meiosis chromosome segregation"/>
    <property type="evidence" value="ECO:0000314"/>
    <property type="project" value="UniProtKB"/>
</dbReference>
<dbReference type="GO" id="GO:0051309">
    <property type="term" value="P:female meiosis chromosome separation"/>
    <property type="evidence" value="ECO:0000303"/>
    <property type="project" value="UniProtKB"/>
</dbReference>
<dbReference type="GO" id="GO:0007066">
    <property type="term" value="P:female meiosis sister chromatid cohesion"/>
    <property type="evidence" value="ECO:0000314"/>
    <property type="project" value="UniProtKB"/>
</dbReference>
<dbReference type="GO" id="GO:0007129">
    <property type="term" value="P:homologous chromosome pairing at meiosis"/>
    <property type="evidence" value="ECO:0000315"/>
    <property type="project" value="MGI"/>
</dbReference>
<dbReference type="GO" id="GO:0051878">
    <property type="term" value="P:lateral element assembly"/>
    <property type="evidence" value="ECO:0000316"/>
    <property type="project" value="MGI"/>
</dbReference>
<dbReference type="GO" id="GO:0051321">
    <property type="term" value="P:meiotic cell cycle"/>
    <property type="evidence" value="ECO:0000314"/>
    <property type="project" value="MGI"/>
</dbReference>
<dbReference type="GO" id="GO:0000711">
    <property type="term" value="P:meiotic DNA repair synthesis"/>
    <property type="evidence" value="ECO:0000316"/>
    <property type="project" value="MGI"/>
</dbReference>
<dbReference type="GO" id="GO:0000278">
    <property type="term" value="P:mitotic cell cycle"/>
    <property type="evidence" value="ECO:0000314"/>
    <property type="project" value="MGI"/>
</dbReference>
<dbReference type="GO" id="GO:0035092">
    <property type="term" value="P:sperm DNA condensation"/>
    <property type="evidence" value="ECO:0000316"/>
    <property type="project" value="MGI"/>
</dbReference>
<dbReference type="GO" id="GO:0007283">
    <property type="term" value="P:spermatogenesis"/>
    <property type="evidence" value="ECO:0000315"/>
    <property type="project" value="UniProtKB"/>
</dbReference>
<dbReference type="GO" id="GO:0007130">
    <property type="term" value="P:synaptonemal complex assembly"/>
    <property type="evidence" value="ECO:0000314"/>
    <property type="project" value="UniProtKB"/>
</dbReference>
<dbReference type="InterPro" id="IPR051443">
    <property type="entry name" value="XLR/SYCP3"/>
</dbReference>
<dbReference type="InterPro" id="IPR006888">
    <property type="entry name" value="XLR/SYCP3/FAM9_dom"/>
</dbReference>
<dbReference type="PANTHER" id="PTHR19368:SF19">
    <property type="entry name" value="SYNAPTONEMAL COMPLEX PROTEIN 3"/>
    <property type="match status" value="1"/>
</dbReference>
<dbReference type="PANTHER" id="PTHR19368">
    <property type="entry name" value="XLR/SCP3/FAM9"/>
    <property type="match status" value="1"/>
</dbReference>
<dbReference type="Pfam" id="PF04803">
    <property type="entry name" value="Cor1"/>
    <property type="match status" value="1"/>
</dbReference>
<accession>P70281</accession>
<accession>Q3V2A4</accession>
<accession>Q549A7</accession>
<proteinExistence type="evidence at protein level"/>